<protein>
    <recommendedName>
        <fullName evidence="1">Phosphoglycerate kinase</fullName>
        <ecNumber evidence="1">2.7.2.3</ecNumber>
    </recommendedName>
</protein>
<proteinExistence type="inferred from homology"/>
<organism>
    <name type="scientific">Anaeromyxobacter dehalogenans (strain 2CP-1 / ATCC BAA-258)</name>
    <dbReference type="NCBI Taxonomy" id="455488"/>
    <lineage>
        <taxon>Bacteria</taxon>
        <taxon>Pseudomonadati</taxon>
        <taxon>Myxococcota</taxon>
        <taxon>Myxococcia</taxon>
        <taxon>Myxococcales</taxon>
        <taxon>Cystobacterineae</taxon>
        <taxon>Anaeromyxobacteraceae</taxon>
        <taxon>Anaeromyxobacter</taxon>
    </lineage>
</organism>
<dbReference type="EC" id="2.7.2.3" evidence="1"/>
<dbReference type="EMBL" id="CP001359">
    <property type="protein sequence ID" value="ACL65762.1"/>
    <property type="molecule type" value="Genomic_DNA"/>
</dbReference>
<dbReference type="RefSeq" id="WP_012633565.1">
    <property type="nucleotide sequence ID" value="NC_011891.1"/>
</dbReference>
<dbReference type="SMR" id="B8JBD5"/>
<dbReference type="KEGG" id="acp:A2cp1_2424"/>
<dbReference type="HOGENOM" id="CLU_025427_0_2_7"/>
<dbReference type="UniPathway" id="UPA00109">
    <property type="reaction ID" value="UER00185"/>
</dbReference>
<dbReference type="Proteomes" id="UP000007089">
    <property type="component" value="Chromosome"/>
</dbReference>
<dbReference type="GO" id="GO:0005829">
    <property type="term" value="C:cytosol"/>
    <property type="evidence" value="ECO:0007669"/>
    <property type="project" value="TreeGrafter"/>
</dbReference>
<dbReference type="GO" id="GO:0043531">
    <property type="term" value="F:ADP binding"/>
    <property type="evidence" value="ECO:0007669"/>
    <property type="project" value="TreeGrafter"/>
</dbReference>
<dbReference type="GO" id="GO:0005524">
    <property type="term" value="F:ATP binding"/>
    <property type="evidence" value="ECO:0007669"/>
    <property type="project" value="UniProtKB-KW"/>
</dbReference>
<dbReference type="GO" id="GO:0004618">
    <property type="term" value="F:phosphoglycerate kinase activity"/>
    <property type="evidence" value="ECO:0007669"/>
    <property type="project" value="UniProtKB-UniRule"/>
</dbReference>
<dbReference type="GO" id="GO:0006094">
    <property type="term" value="P:gluconeogenesis"/>
    <property type="evidence" value="ECO:0007669"/>
    <property type="project" value="TreeGrafter"/>
</dbReference>
<dbReference type="GO" id="GO:0006096">
    <property type="term" value="P:glycolytic process"/>
    <property type="evidence" value="ECO:0007669"/>
    <property type="project" value="UniProtKB-UniRule"/>
</dbReference>
<dbReference type="CDD" id="cd00318">
    <property type="entry name" value="Phosphoglycerate_kinase"/>
    <property type="match status" value="1"/>
</dbReference>
<dbReference type="FunFam" id="3.40.50.1260:FF:000003">
    <property type="entry name" value="Phosphoglycerate kinase"/>
    <property type="match status" value="1"/>
</dbReference>
<dbReference type="FunFam" id="3.40.50.1260:FF:000006">
    <property type="entry name" value="Phosphoglycerate kinase"/>
    <property type="match status" value="1"/>
</dbReference>
<dbReference type="Gene3D" id="3.40.50.1260">
    <property type="entry name" value="Phosphoglycerate kinase, N-terminal domain"/>
    <property type="match status" value="2"/>
</dbReference>
<dbReference type="HAMAP" id="MF_00145">
    <property type="entry name" value="Phosphoglyc_kinase"/>
    <property type="match status" value="1"/>
</dbReference>
<dbReference type="InterPro" id="IPR001576">
    <property type="entry name" value="Phosphoglycerate_kinase"/>
</dbReference>
<dbReference type="InterPro" id="IPR015911">
    <property type="entry name" value="Phosphoglycerate_kinase_CS"/>
</dbReference>
<dbReference type="InterPro" id="IPR015824">
    <property type="entry name" value="Phosphoglycerate_kinase_N"/>
</dbReference>
<dbReference type="InterPro" id="IPR036043">
    <property type="entry name" value="Phosphoglycerate_kinase_sf"/>
</dbReference>
<dbReference type="PANTHER" id="PTHR11406">
    <property type="entry name" value="PHOSPHOGLYCERATE KINASE"/>
    <property type="match status" value="1"/>
</dbReference>
<dbReference type="PANTHER" id="PTHR11406:SF23">
    <property type="entry name" value="PHOSPHOGLYCERATE KINASE 1, CHLOROPLASTIC-RELATED"/>
    <property type="match status" value="1"/>
</dbReference>
<dbReference type="Pfam" id="PF00162">
    <property type="entry name" value="PGK"/>
    <property type="match status" value="1"/>
</dbReference>
<dbReference type="PIRSF" id="PIRSF000724">
    <property type="entry name" value="Pgk"/>
    <property type="match status" value="1"/>
</dbReference>
<dbReference type="PRINTS" id="PR00477">
    <property type="entry name" value="PHGLYCKINASE"/>
</dbReference>
<dbReference type="SUPFAM" id="SSF53748">
    <property type="entry name" value="Phosphoglycerate kinase"/>
    <property type="match status" value="1"/>
</dbReference>
<dbReference type="PROSITE" id="PS00111">
    <property type="entry name" value="PGLYCERATE_KINASE"/>
    <property type="match status" value="1"/>
</dbReference>
<gene>
    <name evidence="1" type="primary">pgk</name>
    <name type="ordered locus">A2cp1_2424</name>
</gene>
<keyword id="KW-0067">ATP-binding</keyword>
<keyword id="KW-0963">Cytoplasm</keyword>
<keyword id="KW-0324">Glycolysis</keyword>
<keyword id="KW-0418">Kinase</keyword>
<keyword id="KW-0547">Nucleotide-binding</keyword>
<keyword id="KW-0808">Transferase</keyword>
<sequence length="396" mass="42463">MALRTIDALELAGKRVFIRVDFNVPLDPQGRVTDDARIRAALPTIRHAIQAKAKVILASHLGRPKGKPEDRQKLTLEPAAVRLSELLSQDVILADDCVGDGVKKLVRDLKDGHVLLLENLRFHPEEEKNDEAFARELASLADVWVNDAFGTAHRAHASTAGMARFVKEKAAGFLVQKEVEYLGKALGSPARPFVAIVGGAKVSDKIKVLENLIAKADAICVGGAMAYTFLKAQGVPVGKSLVEEDKLELARQILERAEARKVDLLLPVDHVCGAEPKETAERVVVNDRAIPDGLMGLDIGPKTLDRYRQRIAAAKTVFWNGPMGLFEQKPWSEGTFGVAKAMAASPAVTVVGGGDSAAAVEQAGLVDAMKHVSTGGGASLEFIEGRELPGVKACEE</sequence>
<feature type="chain" id="PRO_1000192791" description="Phosphoglycerate kinase">
    <location>
        <begin position="1"/>
        <end position="396"/>
    </location>
</feature>
<feature type="binding site" evidence="1">
    <location>
        <begin position="21"/>
        <end position="23"/>
    </location>
    <ligand>
        <name>substrate</name>
    </ligand>
</feature>
<feature type="binding site" evidence="1">
    <location>
        <position position="37"/>
    </location>
    <ligand>
        <name>substrate</name>
    </ligand>
</feature>
<feature type="binding site" evidence="1">
    <location>
        <begin position="60"/>
        <end position="63"/>
    </location>
    <ligand>
        <name>substrate</name>
    </ligand>
</feature>
<feature type="binding site" evidence="1">
    <location>
        <position position="121"/>
    </location>
    <ligand>
        <name>substrate</name>
    </ligand>
</feature>
<feature type="binding site" evidence="1">
    <location>
        <position position="154"/>
    </location>
    <ligand>
        <name>substrate</name>
    </ligand>
</feature>
<feature type="binding site" evidence="1">
    <location>
        <position position="205"/>
    </location>
    <ligand>
        <name>ATP</name>
        <dbReference type="ChEBI" id="CHEBI:30616"/>
    </ligand>
</feature>
<feature type="binding site" evidence="1">
    <location>
        <position position="296"/>
    </location>
    <ligand>
        <name>ATP</name>
        <dbReference type="ChEBI" id="CHEBI:30616"/>
    </ligand>
</feature>
<feature type="binding site" evidence="1">
    <location>
        <position position="327"/>
    </location>
    <ligand>
        <name>ATP</name>
        <dbReference type="ChEBI" id="CHEBI:30616"/>
    </ligand>
</feature>
<feature type="binding site" evidence="1">
    <location>
        <begin position="353"/>
        <end position="356"/>
    </location>
    <ligand>
        <name>ATP</name>
        <dbReference type="ChEBI" id="CHEBI:30616"/>
    </ligand>
</feature>
<reference key="1">
    <citation type="submission" date="2009-01" db="EMBL/GenBank/DDBJ databases">
        <title>Complete sequence of Anaeromyxobacter dehalogenans 2CP-1.</title>
        <authorList>
            <person name="Lucas S."/>
            <person name="Copeland A."/>
            <person name="Lapidus A."/>
            <person name="Glavina del Rio T."/>
            <person name="Dalin E."/>
            <person name="Tice H."/>
            <person name="Bruce D."/>
            <person name="Goodwin L."/>
            <person name="Pitluck S."/>
            <person name="Saunders E."/>
            <person name="Brettin T."/>
            <person name="Detter J.C."/>
            <person name="Han C."/>
            <person name="Larimer F."/>
            <person name="Land M."/>
            <person name="Hauser L."/>
            <person name="Kyrpides N."/>
            <person name="Ovchinnikova G."/>
            <person name="Beliaev A.S."/>
            <person name="Richardson P."/>
        </authorList>
    </citation>
    <scope>NUCLEOTIDE SEQUENCE [LARGE SCALE GENOMIC DNA]</scope>
    <source>
        <strain>2CP-1 / ATCC BAA-258</strain>
    </source>
</reference>
<accession>B8JBD5</accession>
<name>PGK_ANAD2</name>
<comment type="catalytic activity">
    <reaction evidence="1">
        <text>(2R)-3-phosphoglycerate + ATP = (2R)-3-phospho-glyceroyl phosphate + ADP</text>
        <dbReference type="Rhea" id="RHEA:14801"/>
        <dbReference type="ChEBI" id="CHEBI:30616"/>
        <dbReference type="ChEBI" id="CHEBI:57604"/>
        <dbReference type="ChEBI" id="CHEBI:58272"/>
        <dbReference type="ChEBI" id="CHEBI:456216"/>
        <dbReference type="EC" id="2.7.2.3"/>
    </reaction>
</comment>
<comment type="pathway">
    <text evidence="1">Carbohydrate degradation; glycolysis; pyruvate from D-glyceraldehyde 3-phosphate: step 2/5.</text>
</comment>
<comment type="subunit">
    <text evidence="1">Monomer.</text>
</comment>
<comment type="subcellular location">
    <subcellularLocation>
        <location evidence="1">Cytoplasm</location>
    </subcellularLocation>
</comment>
<comment type="similarity">
    <text evidence="1">Belongs to the phosphoglycerate kinase family.</text>
</comment>
<evidence type="ECO:0000255" key="1">
    <source>
        <dbReference type="HAMAP-Rule" id="MF_00145"/>
    </source>
</evidence>